<organism>
    <name type="scientific">Lymantria dispar multicapsid nuclear polyhedrosis virus</name>
    <name type="common">LdMNPV</name>
    <dbReference type="NCBI Taxonomy" id="10449"/>
    <lineage>
        <taxon>Viruses</taxon>
        <taxon>Viruses incertae sedis</taxon>
        <taxon>Naldaviricetes</taxon>
        <taxon>Lefavirales</taxon>
        <taxon>Baculoviridae</taxon>
        <taxon>Alphabaculovirus</taxon>
        <taxon>Alphabaculovirus lydisparis</taxon>
    </lineage>
</organism>
<dbReference type="EMBL" id="D37947">
    <property type="protein sequence ID" value="BAA07167.1"/>
    <property type="molecule type" value="Genomic_DNA"/>
</dbReference>
<dbReference type="PIR" id="JQ1562">
    <property type="entry name" value="JQ1562"/>
</dbReference>
<dbReference type="SMR" id="P36870"/>
<dbReference type="Gene3D" id="3.40.50.300">
    <property type="entry name" value="P-loop containing nucleotide triphosphate hydrolases"/>
    <property type="match status" value="1"/>
</dbReference>
<dbReference type="InterPro" id="IPR027417">
    <property type="entry name" value="P-loop_NTPase"/>
</dbReference>
<dbReference type="SUPFAM" id="SSF52540">
    <property type="entry name" value="P-loop containing nucleoside triphosphate hydrolases"/>
    <property type="match status" value="1"/>
</dbReference>
<organismHost>
    <name type="scientific">Lepidoptera</name>
    <name type="common">butterflies and moths</name>
    <dbReference type="NCBI Taxonomy" id="7088"/>
</organismHost>
<name>YPE6_NPVLD</name>
<reference key="1">
    <citation type="journal article" date="1992" name="J. Gen. Virol.">
        <title>Nucleotide sequence of the polyhedron envelope protein gene region of the Lymantria dispar nuclear polyhedrosis virus.</title>
        <authorList>
            <person name="Bjoernson R.M."/>
            <person name="Rohrmann G.F."/>
        </authorList>
    </citation>
    <scope>NUCLEOTIDE SEQUENCE [GENOMIC DNA]</scope>
</reference>
<reference key="2">
    <citation type="submission" date="1994-09" db="EMBL/GenBank/DDBJ databases">
        <authorList>
            <person name="Rohrmann G.F."/>
        </authorList>
    </citation>
    <scope>SEQUENCE REVISION</scope>
</reference>
<accession>P36870</accession>
<accession>Q90119</accession>
<feature type="chain" id="PRO_0000133081" description="Uncharacterized 33.9 kDa protein in PE 3'region">
    <location>
        <begin position="1"/>
        <end position="291"/>
    </location>
</feature>
<sequence length="291" mass="33942">MSYKLALSGVACLTKSTILRKLEARKYFRVHMLDYKELYDRFDFDLRVGALLHTAYRCTHDRSATVGEYDRVHIFDRLPTESVVYGAIAQGLSEEDGRRAYEKCLEMNLHEDWRSVVLMAAPDTESLVTEKMKRRNNGIDCMNEQYVLAQNKHFKIWSEVMNAPAVEIDWRLDMEAQQTRVINLLHDLVYRWETRENDVLVYYHLLPILRRRYVVCDKGDCPARLREAIDQGSTVVLRWPAGADLEAAKREAVEACKVPLVAVIARDSEWLRSADFERYVVERVLNRAFDC</sequence>
<proteinExistence type="predicted"/>
<protein>
    <recommendedName>
        <fullName>Uncharacterized 33.9 kDa protein in PE 3'region</fullName>
    </recommendedName>
    <alternativeName>
        <fullName>ORF 6</fullName>
    </alternativeName>
</protein>